<accession>C1KVE3</accession>
<sequence>MATEKVFPMTLDGKAKLENELQELKTVKRKEVVERIKIARSFGDLSENSEYDSAKDEQAFVEGRITTIENMIRNAQIIDAAEAHNGLVTLGNTVTFIELPDGEEETYTIVGSAEADPFEGKISNDSPIAKGLLGHKEGEEVTIQTPAGDMSVKIEKITAS</sequence>
<feature type="chain" id="PRO_1000202861" description="Transcription elongation factor GreA">
    <location>
        <begin position="1"/>
        <end position="160"/>
    </location>
</feature>
<feature type="coiled-coil region" evidence="1">
    <location>
        <begin position="10"/>
        <end position="37"/>
    </location>
</feature>
<protein>
    <recommendedName>
        <fullName evidence="1">Transcription elongation factor GreA</fullName>
    </recommendedName>
    <alternativeName>
        <fullName evidence="1">Transcript cleavage factor GreA</fullName>
    </alternativeName>
</protein>
<evidence type="ECO:0000255" key="1">
    <source>
        <dbReference type="HAMAP-Rule" id="MF_00105"/>
    </source>
</evidence>
<gene>
    <name evidence="1" type="primary">greA</name>
    <name type="ordered locus">Lm4b_01506</name>
</gene>
<comment type="function">
    <text evidence="1">Necessary for efficient RNA polymerase transcription elongation past template-encoded arresting sites. The arresting sites in DNA have the property of trapping a certain fraction of elongating RNA polymerases that pass through, resulting in locked ternary complexes. Cleavage of the nascent transcript by cleavage factors such as GreA or GreB allows the resumption of elongation from the new 3'terminus. GreA releases sequences of 2 to 3 nucleotides.</text>
</comment>
<comment type="similarity">
    <text evidence="1">Belongs to the GreA/GreB family.</text>
</comment>
<keyword id="KW-0175">Coiled coil</keyword>
<keyword id="KW-0238">DNA-binding</keyword>
<keyword id="KW-0804">Transcription</keyword>
<keyword id="KW-0805">Transcription regulation</keyword>
<name>GREA_LISMC</name>
<dbReference type="EMBL" id="FM242711">
    <property type="protein sequence ID" value="CAS05268.1"/>
    <property type="molecule type" value="Genomic_DNA"/>
</dbReference>
<dbReference type="RefSeq" id="WP_003722004.1">
    <property type="nucleotide sequence ID" value="NC_012488.1"/>
</dbReference>
<dbReference type="SMR" id="C1KVE3"/>
<dbReference type="GeneID" id="93239373"/>
<dbReference type="KEGG" id="lmc:Lm4b_01506"/>
<dbReference type="HOGENOM" id="CLU_101379_2_1_9"/>
<dbReference type="GO" id="GO:0003677">
    <property type="term" value="F:DNA binding"/>
    <property type="evidence" value="ECO:0007669"/>
    <property type="project" value="UniProtKB-UniRule"/>
</dbReference>
<dbReference type="GO" id="GO:0070063">
    <property type="term" value="F:RNA polymerase binding"/>
    <property type="evidence" value="ECO:0007669"/>
    <property type="project" value="InterPro"/>
</dbReference>
<dbReference type="GO" id="GO:0006354">
    <property type="term" value="P:DNA-templated transcription elongation"/>
    <property type="evidence" value="ECO:0007669"/>
    <property type="project" value="TreeGrafter"/>
</dbReference>
<dbReference type="GO" id="GO:0032784">
    <property type="term" value="P:regulation of DNA-templated transcription elongation"/>
    <property type="evidence" value="ECO:0007669"/>
    <property type="project" value="UniProtKB-UniRule"/>
</dbReference>
<dbReference type="FunFam" id="1.10.287.180:FF:000001">
    <property type="entry name" value="Transcription elongation factor GreA"/>
    <property type="match status" value="1"/>
</dbReference>
<dbReference type="FunFam" id="3.10.50.30:FF:000001">
    <property type="entry name" value="Transcription elongation factor GreA"/>
    <property type="match status" value="1"/>
</dbReference>
<dbReference type="Gene3D" id="3.10.50.30">
    <property type="entry name" value="Transcription elongation factor, GreA/GreB, C-terminal domain"/>
    <property type="match status" value="1"/>
</dbReference>
<dbReference type="Gene3D" id="1.10.287.180">
    <property type="entry name" value="Transcription elongation factor, GreA/GreB, N-terminal domain"/>
    <property type="match status" value="1"/>
</dbReference>
<dbReference type="HAMAP" id="MF_00105">
    <property type="entry name" value="GreA_GreB"/>
    <property type="match status" value="1"/>
</dbReference>
<dbReference type="InterPro" id="IPR036953">
    <property type="entry name" value="GreA/GreB_C_sf"/>
</dbReference>
<dbReference type="InterPro" id="IPR018151">
    <property type="entry name" value="TF_GreA/GreB_CS"/>
</dbReference>
<dbReference type="InterPro" id="IPR006359">
    <property type="entry name" value="Tscrpt_elong_fac_GreA"/>
</dbReference>
<dbReference type="InterPro" id="IPR028624">
    <property type="entry name" value="Tscrpt_elong_fac_GreA/B"/>
</dbReference>
<dbReference type="InterPro" id="IPR001437">
    <property type="entry name" value="Tscrpt_elong_fac_GreA/B_C"/>
</dbReference>
<dbReference type="InterPro" id="IPR023459">
    <property type="entry name" value="Tscrpt_elong_fac_GreA/B_fam"/>
</dbReference>
<dbReference type="InterPro" id="IPR022691">
    <property type="entry name" value="Tscrpt_elong_fac_GreA/B_N"/>
</dbReference>
<dbReference type="InterPro" id="IPR036805">
    <property type="entry name" value="Tscrpt_elong_fac_GreA/B_N_sf"/>
</dbReference>
<dbReference type="NCBIfam" id="TIGR01462">
    <property type="entry name" value="greA"/>
    <property type="match status" value="1"/>
</dbReference>
<dbReference type="NCBIfam" id="NF001261">
    <property type="entry name" value="PRK00226.1-2"/>
    <property type="match status" value="1"/>
</dbReference>
<dbReference type="NCBIfam" id="NF001263">
    <property type="entry name" value="PRK00226.1-4"/>
    <property type="match status" value="1"/>
</dbReference>
<dbReference type="PANTHER" id="PTHR30437">
    <property type="entry name" value="TRANSCRIPTION ELONGATION FACTOR GREA"/>
    <property type="match status" value="1"/>
</dbReference>
<dbReference type="PANTHER" id="PTHR30437:SF4">
    <property type="entry name" value="TRANSCRIPTION ELONGATION FACTOR GREA"/>
    <property type="match status" value="1"/>
</dbReference>
<dbReference type="Pfam" id="PF01272">
    <property type="entry name" value="GreA_GreB"/>
    <property type="match status" value="1"/>
</dbReference>
<dbReference type="Pfam" id="PF03449">
    <property type="entry name" value="GreA_GreB_N"/>
    <property type="match status" value="1"/>
</dbReference>
<dbReference type="PIRSF" id="PIRSF006092">
    <property type="entry name" value="GreA_GreB"/>
    <property type="match status" value="1"/>
</dbReference>
<dbReference type="SUPFAM" id="SSF54534">
    <property type="entry name" value="FKBP-like"/>
    <property type="match status" value="1"/>
</dbReference>
<dbReference type="SUPFAM" id="SSF46557">
    <property type="entry name" value="GreA transcript cleavage protein, N-terminal domain"/>
    <property type="match status" value="1"/>
</dbReference>
<dbReference type="PROSITE" id="PS00829">
    <property type="entry name" value="GREAB_1"/>
    <property type="match status" value="1"/>
</dbReference>
<dbReference type="PROSITE" id="PS00830">
    <property type="entry name" value="GREAB_2"/>
    <property type="match status" value="1"/>
</dbReference>
<reference key="1">
    <citation type="journal article" date="2012" name="BMC Genomics">
        <title>Comparative genomics and transcriptomics of lineages I, II, and III strains of Listeria monocytogenes.</title>
        <authorList>
            <person name="Hain T."/>
            <person name="Ghai R."/>
            <person name="Billion A."/>
            <person name="Kuenne C.T."/>
            <person name="Steinweg C."/>
            <person name="Izar B."/>
            <person name="Mohamed W."/>
            <person name="Mraheil M."/>
            <person name="Domann E."/>
            <person name="Schaffrath S."/>
            <person name="Karst U."/>
            <person name="Goesmann A."/>
            <person name="Oehm S."/>
            <person name="Puhler A."/>
            <person name="Merkl R."/>
            <person name="Vorwerk S."/>
            <person name="Glaser P."/>
            <person name="Garrido P."/>
            <person name="Rusniok C."/>
            <person name="Buchrieser C."/>
            <person name="Goebel W."/>
            <person name="Chakraborty T."/>
        </authorList>
    </citation>
    <scope>NUCLEOTIDE SEQUENCE [LARGE SCALE GENOMIC DNA]</scope>
    <source>
        <strain>CLIP80459</strain>
    </source>
</reference>
<organism>
    <name type="scientific">Listeria monocytogenes serotype 4b (strain CLIP80459)</name>
    <dbReference type="NCBI Taxonomy" id="568819"/>
    <lineage>
        <taxon>Bacteria</taxon>
        <taxon>Bacillati</taxon>
        <taxon>Bacillota</taxon>
        <taxon>Bacilli</taxon>
        <taxon>Bacillales</taxon>
        <taxon>Listeriaceae</taxon>
        <taxon>Listeria</taxon>
    </lineage>
</organism>
<proteinExistence type="inferred from homology"/>